<name>YR869_MIMIV</name>
<keyword id="KW-1185">Reference proteome</keyword>
<protein>
    <recommendedName>
        <fullName>Uncharacterized protein R869</fullName>
    </recommendedName>
</protein>
<organism>
    <name type="scientific">Acanthamoeba polyphaga mimivirus</name>
    <name type="common">APMV</name>
    <dbReference type="NCBI Taxonomy" id="212035"/>
    <lineage>
        <taxon>Viruses</taxon>
        <taxon>Varidnaviria</taxon>
        <taxon>Bamfordvirae</taxon>
        <taxon>Nucleocytoviricota</taxon>
        <taxon>Megaviricetes</taxon>
        <taxon>Imitervirales</taxon>
        <taxon>Mimiviridae</taxon>
        <taxon>Megamimivirinae</taxon>
        <taxon>Mimivirus</taxon>
        <taxon>Mimivirus bradfordmassiliense</taxon>
    </lineage>
</organism>
<reference key="1">
    <citation type="journal article" date="2004" name="Science">
        <title>The 1.2-megabase genome sequence of Mimivirus.</title>
        <authorList>
            <person name="Raoult D."/>
            <person name="Audic S."/>
            <person name="Robert C."/>
            <person name="Abergel C."/>
            <person name="Renesto P."/>
            <person name="Ogata H."/>
            <person name="La Scola B."/>
            <person name="Susan M."/>
            <person name="Claverie J.-M."/>
        </authorList>
    </citation>
    <scope>NUCLEOTIDE SEQUENCE [LARGE SCALE GENOMIC DNA]</scope>
    <source>
        <strain>Rowbotham-Bradford</strain>
    </source>
</reference>
<accession>Q5UP26</accession>
<dbReference type="EMBL" id="AY653733">
    <property type="protein sequence ID" value="AAV51127.1"/>
    <property type="molecule type" value="Genomic_DNA"/>
</dbReference>
<dbReference type="SMR" id="Q5UP26"/>
<dbReference type="KEGG" id="vg:9925533"/>
<dbReference type="Proteomes" id="UP000001134">
    <property type="component" value="Genome"/>
</dbReference>
<organismHost>
    <name type="scientific">Acanthamoeba polyphaga</name>
    <name type="common">Amoeba</name>
    <dbReference type="NCBI Taxonomy" id="5757"/>
</organismHost>
<sequence>MSLKLYFKITNELECHRGFQYKDGLNILKGEFNGDPKDFCVPGRLYFCEPKDIHHYLHFGIHLREVYLPIDNPDFKMVINRLKIYGANMIILGKKYYLKDLDTWKYMIECGLDIHLNENEPLKCAISNGYLEIVGKLL</sequence>
<gene>
    <name type="ordered locus">MIMI_R869</name>
</gene>
<feature type="chain" id="PRO_0000247420" description="Uncharacterized protein R869">
    <location>
        <begin position="1"/>
        <end position="138"/>
    </location>
</feature>
<proteinExistence type="predicted"/>